<dbReference type="EMBL" id="CP000312">
    <property type="protein sequence ID" value="ABG87186.1"/>
    <property type="molecule type" value="Genomic_DNA"/>
</dbReference>
<dbReference type="RefSeq" id="WP_003458514.1">
    <property type="nucleotide sequence ID" value="NZ_CAXVJE010000001.1"/>
</dbReference>
<dbReference type="SMR" id="Q0SS66"/>
<dbReference type="GeneID" id="93001708"/>
<dbReference type="KEGG" id="cpr:CPR_1726"/>
<dbReference type="Proteomes" id="UP000001824">
    <property type="component" value="Chromosome"/>
</dbReference>
<dbReference type="GO" id="GO:0016887">
    <property type="term" value="F:ATP hydrolysis activity"/>
    <property type="evidence" value="ECO:0007669"/>
    <property type="project" value="InterPro"/>
</dbReference>
<dbReference type="GO" id="GO:0005525">
    <property type="term" value="F:GTP binding"/>
    <property type="evidence" value="ECO:0007669"/>
    <property type="project" value="UniProtKB-UniRule"/>
</dbReference>
<dbReference type="GO" id="GO:0043022">
    <property type="term" value="F:ribosome binding"/>
    <property type="evidence" value="ECO:0007669"/>
    <property type="project" value="TreeGrafter"/>
</dbReference>
<dbReference type="GO" id="GO:0042254">
    <property type="term" value="P:ribosome biogenesis"/>
    <property type="evidence" value="ECO:0007669"/>
    <property type="project" value="UniProtKB-KW"/>
</dbReference>
<dbReference type="CDD" id="cd01894">
    <property type="entry name" value="EngA1"/>
    <property type="match status" value="1"/>
</dbReference>
<dbReference type="CDD" id="cd01895">
    <property type="entry name" value="EngA2"/>
    <property type="match status" value="1"/>
</dbReference>
<dbReference type="FunFam" id="3.30.300.20:FF:000004">
    <property type="entry name" value="GTPase Der"/>
    <property type="match status" value="1"/>
</dbReference>
<dbReference type="FunFam" id="3.40.50.300:FF:000040">
    <property type="entry name" value="GTPase Der"/>
    <property type="match status" value="1"/>
</dbReference>
<dbReference type="FunFam" id="3.40.50.300:FF:000057">
    <property type="entry name" value="GTPase Der"/>
    <property type="match status" value="1"/>
</dbReference>
<dbReference type="Gene3D" id="3.30.300.20">
    <property type="match status" value="1"/>
</dbReference>
<dbReference type="Gene3D" id="3.40.50.300">
    <property type="entry name" value="P-loop containing nucleotide triphosphate hydrolases"/>
    <property type="match status" value="2"/>
</dbReference>
<dbReference type="HAMAP" id="MF_00195">
    <property type="entry name" value="GTPase_Der"/>
    <property type="match status" value="1"/>
</dbReference>
<dbReference type="InterPro" id="IPR003593">
    <property type="entry name" value="AAA+_ATPase"/>
</dbReference>
<dbReference type="InterPro" id="IPR031166">
    <property type="entry name" value="G_ENGA"/>
</dbReference>
<dbReference type="InterPro" id="IPR006073">
    <property type="entry name" value="GTP-bd"/>
</dbReference>
<dbReference type="InterPro" id="IPR016484">
    <property type="entry name" value="GTPase_Der"/>
</dbReference>
<dbReference type="InterPro" id="IPR032859">
    <property type="entry name" value="KH_dom-like"/>
</dbReference>
<dbReference type="InterPro" id="IPR015946">
    <property type="entry name" value="KH_dom-like_a/b"/>
</dbReference>
<dbReference type="InterPro" id="IPR027417">
    <property type="entry name" value="P-loop_NTPase"/>
</dbReference>
<dbReference type="InterPro" id="IPR005225">
    <property type="entry name" value="Small_GTP-bd"/>
</dbReference>
<dbReference type="NCBIfam" id="TIGR03594">
    <property type="entry name" value="GTPase_EngA"/>
    <property type="match status" value="1"/>
</dbReference>
<dbReference type="NCBIfam" id="TIGR00231">
    <property type="entry name" value="small_GTP"/>
    <property type="match status" value="2"/>
</dbReference>
<dbReference type="PANTHER" id="PTHR43834">
    <property type="entry name" value="GTPASE DER"/>
    <property type="match status" value="1"/>
</dbReference>
<dbReference type="PANTHER" id="PTHR43834:SF6">
    <property type="entry name" value="GTPASE DER"/>
    <property type="match status" value="1"/>
</dbReference>
<dbReference type="Pfam" id="PF14714">
    <property type="entry name" value="KH_dom-like"/>
    <property type="match status" value="1"/>
</dbReference>
<dbReference type="Pfam" id="PF01926">
    <property type="entry name" value="MMR_HSR1"/>
    <property type="match status" value="2"/>
</dbReference>
<dbReference type="PIRSF" id="PIRSF006485">
    <property type="entry name" value="GTP-binding_EngA"/>
    <property type="match status" value="1"/>
</dbReference>
<dbReference type="PRINTS" id="PR00326">
    <property type="entry name" value="GTP1OBG"/>
</dbReference>
<dbReference type="SMART" id="SM00382">
    <property type="entry name" value="AAA"/>
    <property type="match status" value="2"/>
</dbReference>
<dbReference type="SUPFAM" id="SSF52540">
    <property type="entry name" value="P-loop containing nucleoside triphosphate hydrolases"/>
    <property type="match status" value="2"/>
</dbReference>
<dbReference type="PROSITE" id="PS51712">
    <property type="entry name" value="G_ENGA"/>
    <property type="match status" value="2"/>
</dbReference>
<name>DER_CLOPS</name>
<feature type="chain" id="PRO_1000011610" description="GTPase Der">
    <location>
        <begin position="1"/>
        <end position="438"/>
    </location>
</feature>
<feature type="domain" description="EngA-type G 1">
    <location>
        <begin position="4"/>
        <end position="168"/>
    </location>
</feature>
<feature type="domain" description="EngA-type G 2">
    <location>
        <begin position="177"/>
        <end position="352"/>
    </location>
</feature>
<feature type="domain" description="KH-like" evidence="1">
    <location>
        <begin position="353"/>
        <end position="437"/>
    </location>
</feature>
<feature type="binding site" evidence="1">
    <location>
        <begin position="10"/>
        <end position="17"/>
    </location>
    <ligand>
        <name>GTP</name>
        <dbReference type="ChEBI" id="CHEBI:37565"/>
        <label>1</label>
    </ligand>
</feature>
<feature type="binding site" evidence="1">
    <location>
        <begin position="57"/>
        <end position="61"/>
    </location>
    <ligand>
        <name>GTP</name>
        <dbReference type="ChEBI" id="CHEBI:37565"/>
        <label>1</label>
    </ligand>
</feature>
<feature type="binding site" evidence="1">
    <location>
        <begin position="120"/>
        <end position="123"/>
    </location>
    <ligand>
        <name>GTP</name>
        <dbReference type="ChEBI" id="CHEBI:37565"/>
        <label>1</label>
    </ligand>
</feature>
<feature type="binding site" evidence="1">
    <location>
        <begin position="183"/>
        <end position="190"/>
    </location>
    <ligand>
        <name>GTP</name>
        <dbReference type="ChEBI" id="CHEBI:37565"/>
        <label>2</label>
    </ligand>
</feature>
<feature type="binding site" evidence="1">
    <location>
        <begin position="230"/>
        <end position="234"/>
    </location>
    <ligand>
        <name>GTP</name>
        <dbReference type="ChEBI" id="CHEBI:37565"/>
        <label>2</label>
    </ligand>
</feature>
<feature type="binding site" evidence="1">
    <location>
        <begin position="295"/>
        <end position="298"/>
    </location>
    <ligand>
        <name>GTP</name>
        <dbReference type="ChEBI" id="CHEBI:37565"/>
        <label>2</label>
    </ligand>
</feature>
<evidence type="ECO:0000255" key="1">
    <source>
        <dbReference type="HAMAP-Rule" id="MF_00195"/>
    </source>
</evidence>
<keyword id="KW-0342">GTP-binding</keyword>
<keyword id="KW-0547">Nucleotide-binding</keyword>
<keyword id="KW-0677">Repeat</keyword>
<keyword id="KW-0690">Ribosome biogenesis</keyword>
<organism>
    <name type="scientific">Clostridium perfringens (strain SM101 / Type A)</name>
    <dbReference type="NCBI Taxonomy" id="289380"/>
    <lineage>
        <taxon>Bacteria</taxon>
        <taxon>Bacillati</taxon>
        <taxon>Bacillota</taxon>
        <taxon>Clostridia</taxon>
        <taxon>Eubacteriales</taxon>
        <taxon>Clostridiaceae</taxon>
        <taxon>Clostridium</taxon>
    </lineage>
</organism>
<proteinExistence type="inferred from homology"/>
<accession>Q0SS66</accession>
<reference key="1">
    <citation type="journal article" date="2006" name="Genome Res.">
        <title>Skewed genomic variability in strains of the toxigenic bacterial pathogen, Clostridium perfringens.</title>
        <authorList>
            <person name="Myers G.S.A."/>
            <person name="Rasko D.A."/>
            <person name="Cheung J.K."/>
            <person name="Ravel J."/>
            <person name="Seshadri R."/>
            <person name="DeBoy R.T."/>
            <person name="Ren Q."/>
            <person name="Varga J."/>
            <person name="Awad M.M."/>
            <person name="Brinkac L.M."/>
            <person name="Daugherty S.C."/>
            <person name="Haft D.H."/>
            <person name="Dodson R.J."/>
            <person name="Madupu R."/>
            <person name="Nelson W.C."/>
            <person name="Rosovitz M.J."/>
            <person name="Sullivan S.A."/>
            <person name="Khouri H."/>
            <person name="Dimitrov G.I."/>
            <person name="Watkins K.L."/>
            <person name="Mulligan S."/>
            <person name="Benton J."/>
            <person name="Radune D."/>
            <person name="Fisher D.J."/>
            <person name="Atkins H.S."/>
            <person name="Hiscox T."/>
            <person name="Jost B.H."/>
            <person name="Billington S.J."/>
            <person name="Songer J.G."/>
            <person name="McClane B.A."/>
            <person name="Titball R.W."/>
            <person name="Rood J.I."/>
            <person name="Melville S.B."/>
            <person name="Paulsen I.T."/>
        </authorList>
    </citation>
    <scope>NUCLEOTIDE SEQUENCE [LARGE SCALE GENOMIC DNA]</scope>
    <source>
        <strain>SM101 / Type A</strain>
    </source>
</reference>
<sequence>MSKPIVAMVGRPNVGKSTLFNKLAGKRISIVQDTPGVTRDRVYAESEWLNRKFTMIDTGGIEPESSDIIVKQMRRQAQIAIEMADVIVFVVDGKEGLTAADQEVAQMLRKSKKPVVLVVNKIDRLALEENSYEFYNLGIGDPITISASQGLGLGDMLDEVVKYFNDPSEDEEDDEYIRIAMIGKPNVGKSSLINRLLGEERVIVSNVPGTTRDSIDSYLETEDGKFILVDTAGLRRKSKVKEEIERYSVIRTYAAIEKADVAILVIDAEQGITEQDEKIIGYAHEMNKAIMVVVNKWDLIEKDDKTLSNYQKDLQQKLKFMPYAKYLFISALTGQRVHKILSTAKYCYDNYSKRVSTGLLNDVISKAVLMKEPPVVALKRLKIYYATQVATKPPKFVFFVNDPNLLHFSYGRYLENQLRESFDFDGTGIEIEYRARKE</sequence>
<protein>
    <recommendedName>
        <fullName evidence="1">GTPase Der</fullName>
    </recommendedName>
    <alternativeName>
        <fullName evidence="1">GTP-binding protein EngA</fullName>
    </alternativeName>
</protein>
<gene>
    <name evidence="1" type="primary">der</name>
    <name type="synonym">engA</name>
    <name type="ordered locus">CPR_1726</name>
</gene>
<comment type="function">
    <text evidence="1">GTPase that plays an essential role in the late steps of ribosome biogenesis.</text>
</comment>
<comment type="subunit">
    <text evidence="1">Associates with the 50S ribosomal subunit.</text>
</comment>
<comment type="similarity">
    <text evidence="1">Belongs to the TRAFAC class TrmE-Era-EngA-EngB-Septin-like GTPase superfamily. EngA (Der) GTPase family.</text>
</comment>